<gene>
    <name type="primary">rnf207b</name>
    <name type="synonym">rnf207</name>
</gene>
<reference key="1">
    <citation type="journal article" date="2013" name="Nature">
        <title>The zebrafish reference genome sequence and its relationship to the human genome.</title>
        <authorList>
            <person name="Howe K."/>
            <person name="Clark M.D."/>
            <person name="Torroja C.F."/>
            <person name="Torrance J."/>
            <person name="Berthelot C."/>
            <person name="Muffato M."/>
            <person name="Collins J.E."/>
            <person name="Humphray S."/>
            <person name="McLaren K."/>
            <person name="Matthews L."/>
            <person name="McLaren S."/>
            <person name="Sealy I."/>
            <person name="Caccamo M."/>
            <person name="Churcher C."/>
            <person name="Scott C."/>
            <person name="Barrett J.C."/>
            <person name="Koch R."/>
            <person name="Rauch G.J."/>
            <person name="White S."/>
            <person name="Chow W."/>
            <person name="Kilian B."/>
            <person name="Quintais L.T."/>
            <person name="Guerra-Assuncao J.A."/>
            <person name="Zhou Y."/>
            <person name="Gu Y."/>
            <person name="Yen J."/>
            <person name="Vogel J.H."/>
            <person name="Eyre T."/>
            <person name="Redmond S."/>
            <person name="Banerjee R."/>
            <person name="Chi J."/>
            <person name="Fu B."/>
            <person name="Langley E."/>
            <person name="Maguire S.F."/>
            <person name="Laird G.K."/>
            <person name="Lloyd D."/>
            <person name="Kenyon E."/>
            <person name="Donaldson S."/>
            <person name="Sehra H."/>
            <person name="Almeida-King J."/>
            <person name="Loveland J."/>
            <person name="Trevanion S."/>
            <person name="Jones M."/>
            <person name="Quail M."/>
            <person name="Willey D."/>
            <person name="Hunt A."/>
            <person name="Burton J."/>
            <person name="Sims S."/>
            <person name="McLay K."/>
            <person name="Plumb B."/>
            <person name="Davis J."/>
            <person name="Clee C."/>
            <person name="Oliver K."/>
            <person name="Clark R."/>
            <person name="Riddle C."/>
            <person name="Elliot D."/>
            <person name="Threadgold G."/>
            <person name="Harden G."/>
            <person name="Ware D."/>
            <person name="Begum S."/>
            <person name="Mortimore B."/>
            <person name="Kerry G."/>
            <person name="Heath P."/>
            <person name="Phillimore B."/>
            <person name="Tracey A."/>
            <person name="Corby N."/>
            <person name="Dunn M."/>
            <person name="Johnson C."/>
            <person name="Wood J."/>
            <person name="Clark S."/>
            <person name="Pelan S."/>
            <person name="Griffiths G."/>
            <person name="Smith M."/>
            <person name="Glithero R."/>
            <person name="Howden P."/>
            <person name="Barker N."/>
            <person name="Lloyd C."/>
            <person name="Stevens C."/>
            <person name="Harley J."/>
            <person name="Holt K."/>
            <person name="Panagiotidis G."/>
            <person name="Lovell J."/>
            <person name="Beasley H."/>
            <person name="Henderson C."/>
            <person name="Gordon D."/>
            <person name="Auger K."/>
            <person name="Wright D."/>
            <person name="Collins J."/>
            <person name="Raisen C."/>
            <person name="Dyer L."/>
            <person name="Leung K."/>
            <person name="Robertson L."/>
            <person name="Ambridge K."/>
            <person name="Leongamornlert D."/>
            <person name="McGuire S."/>
            <person name="Gilderthorp R."/>
            <person name="Griffiths C."/>
            <person name="Manthravadi D."/>
            <person name="Nichol S."/>
            <person name="Barker G."/>
            <person name="Whitehead S."/>
            <person name="Kay M."/>
            <person name="Brown J."/>
            <person name="Murnane C."/>
            <person name="Gray E."/>
            <person name="Humphries M."/>
            <person name="Sycamore N."/>
            <person name="Barker D."/>
            <person name="Saunders D."/>
            <person name="Wallis J."/>
            <person name="Babbage A."/>
            <person name="Hammond S."/>
            <person name="Mashreghi-Mohammadi M."/>
            <person name="Barr L."/>
            <person name="Martin S."/>
            <person name="Wray P."/>
            <person name="Ellington A."/>
            <person name="Matthews N."/>
            <person name="Ellwood M."/>
            <person name="Woodmansey R."/>
            <person name="Clark G."/>
            <person name="Cooper J."/>
            <person name="Tromans A."/>
            <person name="Grafham D."/>
            <person name="Skuce C."/>
            <person name="Pandian R."/>
            <person name="Andrews R."/>
            <person name="Harrison E."/>
            <person name="Kimberley A."/>
            <person name="Garnett J."/>
            <person name="Fosker N."/>
            <person name="Hall R."/>
            <person name="Garner P."/>
            <person name="Kelly D."/>
            <person name="Bird C."/>
            <person name="Palmer S."/>
            <person name="Gehring I."/>
            <person name="Berger A."/>
            <person name="Dooley C.M."/>
            <person name="Ersan-Urun Z."/>
            <person name="Eser C."/>
            <person name="Geiger H."/>
            <person name="Geisler M."/>
            <person name="Karotki L."/>
            <person name="Kirn A."/>
            <person name="Konantz J."/>
            <person name="Konantz M."/>
            <person name="Oberlander M."/>
            <person name="Rudolph-Geiger S."/>
            <person name="Teucke M."/>
            <person name="Lanz C."/>
            <person name="Raddatz G."/>
            <person name="Osoegawa K."/>
            <person name="Zhu B."/>
            <person name="Rapp A."/>
            <person name="Widaa S."/>
            <person name="Langford C."/>
            <person name="Yang F."/>
            <person name="Schuster S.C."/>
            <person name="Carter N.P."/>
            <person name="Harrow J."/>
            <person name="Ning Z."/>
            <person name="Herrero J."/>
            <person name="Searle S.M."/>
            <person name="Enright A."/>
            <person name="Geisler R."/>
            <person name="Plasterk R.H."/>
            <person name="Lee C."/>
            <person name="Westerfield M."/>
            <person name="de Jong P.J."/>
            <person name="Zon L.I."/>
            <person name="Postlethwait J.H."/>
            <person name="Nusslein-Volhard C."/>
            <person name="Hubbard T.J."/>
            <person name="Roest Crollius H."/>
            <person name="Rogers J."/>
            <person name="Stemple D.L."/>
        </authorList>
    </citation>
    <scope>NUCLEOTIDE SEQUENCE [LARGE SCALE GENOMIC DNA]</scope>
    <source>
        <strain>Tuebingen</strain>
    </source>
</reference>
<reference key="2">
    <citation type="journal article" date="2014" name="J. Biol. Chem.">
        <title>RING finger protein RNF207, a novel regulator of cardiac excitation.</title>
        <authorList>
            <person name="Roder K."/>
            <person name="Werdich A.A."/>
            <person name="Li W."/>
            <person name="Liu M."/>
            <person name="Kim T.Y."/>
            <person name="Organ-Darling L.E."/>
            <person name="Moshal K.S."/>
            <person name="Hwang J.M."/>
            <person name="Lu Y."/>
            <person name="Choi B.R."/>
            <person name="MacRae C.A."/>
            <person name="Koren G."/>
        </authorList>
    </citation>
    <scope>FUNCTION</scope>
    <scope>DISRUPTION PHENOTYPE</scope>
</reference>
<keyword id="KW-0963">Cytoplasm</keyword>
<keyword id="KW-0479">Metal-binding</keyword>
<keyword id="KW-1185">Reference proteome</keyword>
<keyword id="KW-0862">Zinc</keyword>
<keyword id="KW-0863">Zinc-finger</keyword>
<sequence>MSGEIFYSVDNLYDLDSANCHPLVCHLCQEQYEHPCLLDCYHTFCASCLRGRVADSRLTCPVCGHQSVVKGINALPPEDRLLKFLVDSSADSEETVQCANCDLECKKQDVDAMYYCNTCCQPLCRDCRETTHKAKMFSRHEIVSLAKRTKEAHKKCALHEEFYIMFSTEKKSMLCINCFRDMQVESRAHCIDIETAYIQGCEKLDQAVLAVKELQMSAREAIILLKAMIGEVRANVDEEESAICTLFSNMQEKLAERKKILLKAARSQHEEKERTFKEQLSHLAALLPTLQVHLVTCSAFLSSANKFEFLDMGYQLMERLKKIVKLPHRLRPTQSSKINTEYRSEFARCLEPLLLLGQRRSMSTTGSVALALGNASGLMQSSLSVQCHSPAMSDMSLCSSVVRRPTSHRYISTKVLLAKGGETPFMEHCCNYENSYRTLQTEIQKLKDQVQEIHRDLTKHHSLTKPDSMSEILEKSVQVDSQISSEYASVELMRAMFEEIWEETLQRVANEQEIYEAQLHDLLQLKQENSYLTTISRQIGPYIRSIAKVKERLEPRLKEPKELKDDRTEIMLKLYEDSTSTADTQPSNELSCNTEDNWTLNSLSEETNPKNKDYYRTNKQKNTTDSTNRKEIPM</sequence>
<proteinExistence type="inferred from homology"/>
<evidence type="ECO:0000250" key="1">
    <source>
        <dbReference type="UniProtKB" id="Q6ZRF8"/>
    </source>
</evidence>
<evidence type="ECO:0000255" key="2">
    <source>
        <dbReference type="PROSITE-ProRule" id="PRU00024"/>
    </source>
</evidence>
<evidence type="ECO:0000255" key="3">
    <source>
        <dbReference type="PROSITE-ProRule" id="PRU00175"/>
    </source>
</evidence>
<evidence type="ECO:0000256" key="4">
    <source>
        <dbReference type="SAM" id="MobiDB-lite"/>
    </source>
</evidence>
<evidence type="ECO:0000269" key="5">
    <source>
    </source>
</evidence>
<dbReference type="EMBL" id="CR847529">
    <property type="status" value="NOT_ANNOTATED_CDS"/>
    <property type="molecule type" value="Genomic_DNA"/>
</dbReference>
<dbReference type="RefSeq" id="NP_001188378.1">
    <property type="nucleotide sequence ID" value="NM_001201449.1"/>
</dbReference>
<dbReference type="RefSeq" id="XP_068072891.1">
    <property type="nucleotide sequence ID" value="XM_068216790.1"/>
</dbReference>
<dbReference type="SMR" id="E9QHE3"/>
<dbReference type="FunCoup" id="E9QHE3">
    <property type="interactions" value="550"/>
</dbReference>
<dbReference type="STRING" id="7955.ENSDARP00000122299"/>
<dbReference type="PaxDb" id="7955-ENSDARP00000122299"/>
<dbReference type="Ensembl" id="ENSDART00000142000">
    <property type="protein sequence ID" value="ENSDARP00000122299"/>
    <property type="gene ID" value="ENSDARG00000012409"/>
</dbReference>
<dbReference type="GeneID" id="568322"/>
<dbReference type="KEGG" id="dre:568322"/>
<dbReference type="AGR" id="ZFIN:ZDB-GENE-080227-9"/>
<dbReference type="CTD" id="568322"/>
<dbReference type="ZFIN" id="ZDB-GENE-080227-9">
    <property type="gene designation" value="rnf207b"/>
</dbReference>
<dbReference type="eggNOG" id="KOG2177">
    <property type="taxonomic scope" value="Eukaryota"/>
</dbReference>
<dbReference type="HOGENOM" id="CLU_034912_0_0_1"/>
<dbReference type="InParanoid" id="E9QHE3"/>
<dbReference type="OMA" id="ELDTMYF"/>
<dbReference type="OrthoDB" id="9049620at2759"/>
<dbReference type="PhylomeDB" id="E9QHE3"/>
<dbReference type="TreeFam" id="TF318184"/>
<dbReference type="PRO" id="PR:E9QHE3"/>
<dbReference type="Proteomes" id="UP000000437">
    <property type="component" value="Alternate scaffold 23"/>
</dbReference>
<dbReference type="Proteomes" id="UP000000437">
    <property type="component" value="Chromosome 23"/>
</dbReference>
<dbReference type="Bgee" id="ENSDARG00000012409">
    <property type="expression patterns" value="Expressed in heart and 10 other cell types or tissues"/>
</dbReference>
<dbReference type="GO" id="GO:0048471">
    <property type="term" value="C:perinuclear region of cytoplasm"/>
    <property type="evidence" value="ECO:0000318"/>
    <property type="project" value="GO_Central"/>
</dbReference>
<dbReference type="GO" id="GO:0030544">
    <property type="term" value="F:Hsp70 protein binding"/>
    <property type="evidence" value="ECO:0000318"/>
    <property type="project" value="GO_Central"/>
</dbReference>
<dbReference type="GO" id="GO:0044325">
    <property type="term" value="F:transmembrane transporter binding"/>
    <property type="evidence" value="ECO:0000318"/>
    <property type="project" value="GO_Central"/>
</dbReference>
<dbReference type="GO" id="GO:0008270">
    <property type="term" value="F:zinc ion binding"/>
    <property type="evidence" value="ECO:0007669"/>
    <property type="project" value="UniProtKB-KW"/>
</dbReference>
<dbReference type="GO" id="GO:1905033">
    <property type="term" value="P:positive regulation of membrane repolarization during cardiac muscle cell action potential"/>
    <property type="evidence" value="ECO:0000315"/>
    <property type="project" value="BHF-UCL"/>
</dbReference>
<dbReference type="GO" id="GO:1905026">
    <property type="term" value="P:positive regulation of membrane repolarization during ventricular cardiac muscle cell action potential"/>
    <property type="evidence" value="ECO:0000315"/>
    <property type="project" value="BHF-UCL"/>
</dbReference>
<dbReference type="GO" id="GO:0055117">
    <property type="term" value="P:regulation of cardiac muscle contraction"/>
    <property type="evidence" value="ECO:0000315"/>
    <property type="project" value="BHF-UCL"/>
</dbReference>
<dbReference type="GO" id="GO:1901207">
    <property type="term" value="P:regulation of heart looping"/>
    <property type="evidence" value="ECO:0000315"/>
    <property type="project" value="BHF-UCL"/>
</dbReference>
<dbReference type="CDD" id="cd19814">
    <property type="entry name" value="Bbox1_RNF207-like"/>
    <property type="match status" value="1"/>
</dbReference>
<dbReference type="CDD" id="cd16558">
    <property type="entry name" value="RING-HC_RNF207"/>
    <property type="match status" value="1"/>
</dbReference>
<dbReference type="FunFam" id="3.30.40.10:FF:000478">
    <property type="entry name" value="Ring finger protein 207"/>
    <property type="match status" value="1"/>
</dbReference>
<dbReference type="Gene3D" id="1.20.58.1540">
    <property type="entry name" value="Actin interacting protein 3, C-terminal domain"/>
    <property type="match status" value="1"/>
</dbReference>
<dbReference type="Gene3D" id="3.30.160.60">
    <property type="entry name" value="Classic Zinc Finger"/>
    <property type="match status" value="1"/>
</dbReference>
<dbReference type="Gene3D" id="3.30.40.10">
    <property type="entry name" value="Zinc/RING finger domain, C3HC4 (zinc finger)"/>
    <property type="match status" value="1"/>
</dbReference>
<dbReference type="InterPro" id="IPR039320">
    <property type="entry name" value="RNF207"/>
</dbReference>
<dbReference type="InterPro" id="IPR000315">
    <property type="entry name" value="Znf_B-box"/>
</dbReference>
<dbReference type="InterPro" id="IPR018957">
    <property type="entry name" value="Znf_C3HC4_RING-type"/>
</dbReference>
<dbReference type="InterPro" id="IPR001841">
    <property type="entry name" value="Znf_RING"/>
</dbReference>
<dbReference type="InterPro" id="IPR013083">
    <property type="entry name" value="Znf_RING/FYVE/PHD"/>
</dbReference>
<dbReference type="InterPro" id="IPR017907">
    <property type="entry name" value="Znf_RING_CS"/>
</dbReference>
<dbReference type="PANTHER" id="PTHR22635">
    <property type="entry name" value="RING FINGER PROTEIN 207"/>
    <property type="match status" value="1"/>
</dbReference>
<dbReference type="PANTHER" id="PTHR22635:SF0">
    <property type="entry name" value="RING FINGER PROTEIN 207"/>
    <property type="match status" value="1"/>
</dbReference>
<dbReference type="Pfam" id="PF00643">
    <property type="entry name" value="zf-B_box"/>
    <property type="match status" value="1"/>
</dbReference>
<dbReference type="Pfam" id="PF00097">
    <property type="entry name" value="zf-C3HC4"/>
    <property type="match status" value="1"/>
</dbReference>
<dbReference type="SMART" id="SM00184">
    <property type="entry name" value="RING"/>
    <property type="match status" value="1"/>
</dbReference>
<dbReference type="SUPFAM" id="SSF57850">
    <property type="entry name" value="RING/U-box"/>
    <property type="match status" value="1"/>
</dbReference>
<dbReference type="PROSITE" id="PS50119">
    <property type="entry name" value="ZF_BBOX"/>
    <property type="match status" value="1"/>
</dbReference>
<dbReference type="PROSITE" id="PS00518">
    <property type="entry name" value="ZF_RING_1"/>
    <property type="match status" value="1"/>
</dbReference>
<dbReference type="PROSITE" id="PS50089">
    <property type="entry name" value="ZF_RING_2"/>
    <property type="match status" value="1"/>
</dbReference>
<comment type="function">
    <text evidence="1">Plays a role in cardiac repolarization possibly by stabilizing membrane expression of the potassium channel kcnh6a/zerg, or by assisting its synthesis, folding or export from the endoplasmic reticulum, in a heat shock protein-dependent manner.</text>
</comment>
<comment type="subcellular location">
    <subcellularLocation>
        <location evidence="1">Cytoplasm</location>
    </subcellularLocation>
    <text evidence="1">Probably located in the endoplasmic reticulum and/or possibly the cis-Golgi apparatus.</text>
</comment>
<comment type="disruption phenotype">
    <text evidence="5">Morpholino knockdown of the protein results in abnormal contractility and looping in developing heart. Morphants show prolonged duration of cardiac action potentials, occasional 2:1 atrioventricular block and slowed conduction velocity (PubMed:25281747).</text>
</comment>
<organism>
    <name type="scientific">Danio rerio</name>
    <name type="common">Zebrafish</name>
    <name type="synonym">Brachydanio rerio</name>
    <dbReference type="NCBI Taxonomy" id="7955"/>
    <lineage>
        <taxon>Eukaryota</taxon>
        <taxon>Metazoa</taxon>
        <taxon>Chordata</taxon>
        <taxon>Craniata</taxon>
        <taxon>Vertebrata</taxon>
        <taxon>Euteleostomi</taxon>
        <taxon>Actinopterygii</taxon>
        <taxon>Neopterygii</taxon>
        <taxon>Teleostei</taxon>
        <taxon>Ostariophysi</taxon>
        <taxon>Cypriniformes</taxon>
        <taxon>Danionidae</taxon>
        <taxon>Danioninae</taxon>
        <taxon>Danio</taxon>
    </lineage>
</organism>
<feature type="chain" id="PRO_0000436857" description="RING finger protein 207">
    <location>
        <begin position="1"/>
        <end position="634"/>
    </location>
</feature>
<feature type="zinc finger region" description="RING-type" evidence="3">
    <location>
        <begin position="25"/>
        <end position="63"/>
    </location>
</feature>
<feature type="zinc finger region" description="B box-type; atypical" evidence="2">
    <location>
        <begin position="93"/>
        <end position="145"/>
    </location>
</feature>
<feature type="region of interest" description="Disordered" evidence="4">
    <location>
        <begin position="575"/>
        <end position="634"/>
    </location>
</feature>
<feature type="compositionally biased region" description="Polar residues" evidence="4">
    <location>
        <begin position="577"/>
        <end position="606"/>
    </location>
</feature>
<feature type="compositionally biased region" description="Basic and acidic residues" evidence="4">
    <location>
        <begin position="607"/>
        <end position="616"/>
    </location>
</feature>
<feature type="binding site" evidence="2">
    <location>
        <position position="98"/>
    </location>
    <ligand>
        <name>Zn(2+)</name>
        <dbReference type="ChEBI" id="CHEBI:29105"/>
    </ligand>
</feature>
<feature type="binding site" evidence="2">
    <location>
        <position position="101"/>
    </location>
    <ligand>
        <name>Zn(2+)</name>
        <dbReference type="ChEBI" id="CHEBI:29105"/>
    </ligand>
</feature>
<feature type="binding site" evidence="2">
    <location>
        <position position="127"/>
    </location>
    <ligand>
        <name>Zn(2+)</name>
        <dbReference type="ChEBI" id="CHEBI:29105"/>
    </ligand>
</feature>
<feature type="binding site" evidence="2">
    <location>
        <position position="132"/>
    </location>
    <ligand>
        <name>Zn(2+)</name>
        <dbReference type="ChEBI" id="CHEBI:29105"/>
    </ligand>
</feature>
<name>RN207_DANRE</name>
<accession>E9QHE3</accession>
<protein>
    <recommendedName>
        <fullName>RING finger protein 207</fullName>
    </recommendedName>
</protein>